<dbReference type="EMBL" id="X79052">
    <property type="protein sequence ID" value="CAA55654.1"/>
    <property type="molecule type" value="mRNA"/>
</dbReference>
<dbReference type="EMBL" id="AC007651">
    <property type="protein sequence ID" value="AAD50032.1"/>
    <property type="molecule type" value="Genomic_DNA"/>
</dbReference>
<dbReference type="EMBL" id="CP002684">
    <property type="protein sequence ID" value="AEE29531.1"/>
    <property type="molecule type" value="Genomic_DNA"/>
</dbReference>
<dbReference type="EMBL" id="AY048302">
    <property type="protein sequence ID" value="AAK82564.1"/>
    <property type="molecule type" value="mRNA"/>
</dbReference>
<dbReference type="EMBL" id="AY139794">
    <property type="protein sequence ID" value="AAM98100.1"/>
    <property type="molecule type" value="mRNA"/>
</dbReference>
<dbReference type="PIR" id="S44261">
    <property type="entry name" value="S44261"/>
</dbReference>
<dbReference type="RefSeq" id="NP_173145.1">
    <property type="nucleotide sequence ID" value="NM_101562.4"/>
</dbReference>
<dbReference type="SMR" id="Q39224"/>
<dbReference type="FunCoup" id="Q39224">
    <property type="interactions" value="28"/>
</dbReference>
<dbReference type="STRING" id="3702.Q39224"/>
<dbReference type="PaxDb" id="3702-AT1G17020.1"/>
<dbReference type="ProteomicsDB" id="226728"/>
<dbReference type="EnsemblPlants" id="AT1G17020.1">
    <property type="protein sequence ID" value="AT1G17020.1"/>
    <property type="gene ID" value="AT1G17020"/>
</dbReference>
<dbReference type="GeneID" id="838272"/>
<dbReference type="Gramene" id="AT1G17020.1">
    <property type="protein sequence ID" value="AT1G17020.1"/>
    <property type="gene ID" value="AT1G17020"/>
</dbReference>
<dbReference type="KEGG" id="ath:AT1G17020"/>
<dbReference type="Araport" id="AT1G17020"/>
<dbReference type="TAIR" id="AT1G17020">
    <property type="gene designation" value="SRG1"/>
</dbReference>
<dbReference type="eggNOG" id="KOG0143">
    <property type="taxonomic scope" value="Eukaryota"/>
</dbReference>
<dbReference type="HOGENOM" id="CLU_010119_16_0_1"/>
<dbReference type="InParanoid" id="Q39224"/>
<dbReference type="OMA" id="KWYPELY"/>
<dbReference type="OrthoDB" id="288590at2759"/>
<dbReference type="PhylomeDB" id="Q39224"/>
<dbReference type="BioCyc" id="ARA:AT1G17020-MONOMER"/>
<dbReference type="PRO" id="PR:Q39224"/>
<dbReference type="Proteomes" id="UP000006548">
    <property type="component" value="Chromosome 1"/>
</dbReference>
<dbReference type="ExpressionAtlas" id="Q39224">
    <property type="expression patterns" value="baseline and differential"/>
</dbReference>
<dbReference type="GO" id="GO:0046872">
    <property type="term" value="F:metal ion binding"/>
    <property type="evidence" value="ECO:0007669"/>
    <property type="project" value="UniProtKB-KW"/>
</dbReference>
<dbReference type="GO" id="GO:0016682">
    <property type="term" value="F:oxidoreductase activity, acting on diphenols and related substances as donors, oxygen as acceptor"/>
    <property type="evidence" value="ECO:0000250"/>
    <property type="project" value="TAIR"/>
</dbReference>
<dbReference type="GO" id="GO:0010150">
    <property type="term" value="P:leaf senescence"/>
    <property type="evidence" value="ECO:0000270"/>
    <property type="project" value="TAIR"/>
</dbReference>
<dbReference type="FunFam" id="2.60.120.330:FF:000001">
    <property type="entry name" value="Protein SRG1"/>
    <property type="match status" value="1"/>
</dbReference>
<dbReference type="Gene3D" id="2.60.120.330">
    <property type="entry name" value="B-lactam Antibiotic, Isopenicillin N Synthase, Chain"/>
    <property type="match status" value="1"/>
</dbReference>
<dbReference type="InterPro" id="IPR026992">
    <property type="entry name" value="DIOX_N"/>
</dbReference>
<dbReference type="InterPro" id="IPR044861">
    <property type="entry name" value="IPNS-like_FE2OG_OXY"/>
</dbReference>
<dbReference type="InterPro" id="IPR027443">
    <property type="entry name" value="IPNS-like_sf"/>
</dbReference>
<dbReference type="InterPro" id="IPR005123">
    <property type="entry name" value="Oxoglu/Fe-dep_dioxygenase_dom"/>
</dbReference>
<dbReference type="InterPro" id="IPR050295">
    <property type="entry name" value="Plant_2OG-oxidoreductases"/>
</dbReference>
<dbReference type="PANTHER" id="PTHR47991">
    <property type="entry name" value="OXOGLUTARATE/IRON-DEPENDENT DIOXYGENASE"/>
    <property type="match status" value="1"/>
</dbReference>
<dbReference type="Pfam" id="PF03171">
    <property type="entry name" value="2OG-FeII_Oxy"/>
    <property type="match status" value="1"/>
</dbReference>
<dbReference type="Pfam" id="PF14226">
    <property type="entry name" value="DIOX_N"/>
    <property type="match status" value="1"/>
</dbReference>
<dbReference type="SUPFAM" id="SSF51197">
    <property type="entry name" value="Clavaminate synthase-like"/>
    <property type="match status" value="1"/>
</dbReference>
<dbReference type="PROSITE" id="PS51471">
    <property type="entry name" value="FE2OG_OXY"/>
    <property type="match status" value="1"/>
</dbReference>
<sequence>MEAKGAAQWSSILVPSVQEMVKEKTITTVPPRYVRSDQDKTEVDDDFDVKIEIPIIDMKRLCSSTTMDSEVEKLDFACKEWGFFQLVNHGIDSSFLDKVKSEIQDFFNLPMEEKKKFWQRPDEIEGFGQAFVVSEDQKLDWADLFFHTVQPVELRKPHLFPKLPLPFRDTLEMYSSEVQSVAKILIAKMARALEIKPEELEKLFDDVDSVQSMRMNYYPPCPQPDQVIGLTPHSDSVGLTVLMQVNDVEGLQIKKDGKWVPVKPLPNAFIVNIGDVLEIITNGTYRSIEHRGVVNSEKERLSIATFHNVGMYKEVGPAKSLVERQKVARFKRLTMKEYNDGLFSRTLDGKAYLDALRI</sequence>
<evidence type="ECO:0000255" key="1">
    <source>
        <dbReference type="PROSITE-ProRule" id="PRU00805"/>
    </source>
</evidence>
<evidence type="ECO:0000269" key="2">
    <source>
    </source>
</evidence>
<evidence type="ECO:0000269" key="3">
    <source>
    </source>
</evidence>
<evidence type="ECO:0000305" key="4"/>
<proteinExistence type="evidence at transcript level"/>
<feature type="chain" id="PRO_0000358940" description="Protein SRG1">
    <location>
        <begin position="1"/>
        <end position="358"/>
    </location>
</feature>
<feature type="domain" description="Fe2OG dioxygenase" evidence="1">
    <location>
        <begin position="209"/>
        <end position="309"/>
    </location>
</feature>
<feature type="binding site" evidence="1">
    <location>
        <position position="233"/>
    </location>
    <ligand>
        <name>Fe cation</name>
        <dbReference type="ChEBI" id="CHEBI:24875"/>
    </ligand>
</feature>
<feature type="binding site" evidence="1">
    <location>
        <position position="235"/>
    </location>
    <ligand>
        <name>Fe cation</name>
        <dbReference type="ChEBI" id="CHEBI:24875"/>
    </ligand>
</feature>
<feature type="binding site" evidence="1">
    <location>
        <position position="290"/>
    </location>
    <ligand>
        <name>Fe cation</name>
        <dbReference type="ChEBI" id="CHEBI:24875"/>
    </ligand>
</feature>
<gene>
    <name type="primary">SRG1</name>
    <name type="ordered locus">At1g17020</name>
    <name type="ORF">F20D23.28</name>
    <name type="ORF">F6I1.30</name>
</gene>
<organism>
    <name type="scientific">Arabidopsis thaliana</name>
    <name type="common">Mouse-ear cress</name>
    <dbReference type="NCBI Taxonomy" id="3702"/>
    <lineage>
        <taxon>Eukaryota</taxon>
        <taxon>Viridiplantae</taxon>
        <taxon>Streptophyta</taxon>
        <taxon>Embryophyta</taxon>
        <taxon>Tracheophyta</taxon>
        <taxon>Spermatophyta</taxon>
        <taxon>Magnoliopsida</taxon>
        <taxon>eudicotyledons</taxon>
        <taxon>Gunneridae</taxon>
        <taxon>Pentapetalae</taxon>
        <taxon>rosids</taxon>
        <taxon>malvids</taxon>
        <taxon>Brassicales</taxon>
        <taxon>Brassicaceae</taxon>
        <taxon>Camelineae</taxon>
        <taxon>Arabidopsis</taxon>
    </lineage>
</organism>
<protein>
    <recommendedName>
        <fullName>Protein SRG1</fullName>
        <shortName>AtSRG1</shortName>
    </recommendedName>
    <alternativeName>
        <fullName>Protein SENESCENCE-RELATED GENE 1</fullName>
    </alternativeName>
</protein>
<keyword id="KW-0408">Iron</keyword>
<keyword id="KW-0479">Metal-binding</keyword>
<keyword id="KW-0560">Oxidoreductase</keyword>
<keyword id="KW-1185">Reference proteome</keyword>
<accession>Q39224</accession>
<comment type="tissue specificity">
    <text evidence="3">Low expression in roots and leaves.</text>
</comment>
<comment type="developmental stage">
    <text evidence="3">Highly induced during normal senescence.</text>
</comment>
<comment type="induction">
    <text evidence="2">By virus infection.</text>
</comment>
<comment type="miscellaneous">
    <text>Unlike the homologous protein NCS1 of Coptis japonica, SRG1 has no norcoclaurine synthase activity.</text>
</comment>
<comment type="similarity">
    <text evidence="4">Belongs to the iron/ascorbate-dependent oxidoreductase family.</text>
</comment>
<reference key="1">
    <citation type="journal article" date="1997" name="Plant Physiol.">
        <title>Identification of proliferation-induced genes in Arabidopsis thaliana. Characterization of a new member of the highly evolutionarily conserved histone H2A.F/Z variant subfamily.</title>
        <authorList>
            <person name="Callard D."/>
            <person name="Mazzolini L."/>
        </authorList>
    </citation>
    <scope>NUCLEOTIDE SEQUENCE [MRNA]</scope>
    <scope>TISSUE SPECIFICITY</scope>
    <scope>DEVELOPMENTAL STAGE</scope>
    <source>
        <strain>cv. C24</strain>
    </source>
</reference>
<reference key="2">
    <citation type="journal article" date="2000" name="Nature">
        <title>Sequence and analysis of chromosome 1 of the plant Arabidopsis thaliana.</title>
        <authorList>
            <person name="Theologis A."/>
            <person name="Ecker J.R."/>
            <person name="Palm C.J."/>
            <person name="Federspiel N.A."/>
            <person name="Kaul S."/>
            <person name="White O."/>
            <person name="Alonso J."/>
            <person name="Altafi H."/>
            <person name="Araujo R."/>
            <person name="Bowman C.L."/>
            <person name="Brooks S.Y."/>
            <person name="Buehler E."/>
            <person name="Chan A."/>
            <person name="Chao Q."/>
            <person name="Chen H."/>
            <person name="Cheuk R.F."/>
            <person name="Chin C.W."/>
            <person name="Chung M.K."/>
            <person name="Conn L."/>
            <person name="Conway A.B."/>
            <person name="Conway A.R."/>
            <person name="Creasy T.H."/>
            <person name="Dewar K."/>
            <person name="Dunn P."/>
            <person name="Etgu P."/>
            <person name="Feldblyum T.V."/>
            <person name="Feng J.-D."/>
            <person name="Fong B."/>
            <person name="Fujii C.Y."/>
            <person name="Gill J.E."/>
            <person name="Goldsmith A.D."/>
            <person name="Haas B."/>
            <person name="Hansen N.F."/>
            <person name="Hughes B."/>
            <person name="Huizar L."/>
            <person name="Hunter J.L."/>
            <person name="Jenkins J."/>
            <person name="Johnson-Hopson C."/>
            <person name="Khan S."/>
            <person name="Khaykin E."/>
            <person name="Kim C.J."/>
            <person name="Koo H.L."/>
            <person name="Kremenetskaia I."/>
            <person name="Kurtz D.B."/>
            <person name="Kwan A."/>
            <person name="Lam B."/>
            <person name="Langin-Hooper S."/>
            <person name="Lee A."/>
            <person name="Lee J.M."/>
            <person name="Lenz C.A."/>
            <person name="Li J.H."/>
            <person name="Li Y.-P."/>
            <person name="Lin X."/>
            <person name="Liu S.X."/>
            <person name="Liu Z.A."/>
            <person name="Luros J.S."/>
            <person name="Maiti R."/>
            <person name="Marziali A."/>
            <person name="Militscher J."/>
            <person name="Miranda M."/>
            <person name="Nguyen M."/>
            <person name="Nierman W.C."/>
            <person name="Osborne B.I."/>
            <person name="Pai G."/>
            <person name="Peterson J."/>
            <person name="Pham P.K."/>
            <person name="Rizzo M."/>
            <person name="Rooney T."/>
            <person name="Rowley D."/>
            <person name="Sakano H."/>
            <person name="Salzberg S.L."/>
            <person name="Schwartz J.R."/>
            <person name="Shinn P."/>
            <person name="Southwick A.M."/>
            <person name="Sun H."/>
            <person name="Tallon L.J."/>
            <person name="Tambunga G."/>
            <person name="Toriumi M.J."/>
            <person name="Town C.D."/>
            <person name="Utterback T."/>
            <person name="Van Aken S."/>
            <person name="Vaysberg M."/>
            <person name="Vysotskaia V.S."/>
            <person name="Walker M."/>
            <person name="Wu D."/>
            <person name="Yu G."/>
            <person name="Fraser C.M."/>
            <person name="Venter J.C."/>
            <person name="Davis R.W."/>
        </authorList>
    </citation>
    <scope>NUCLEOTIDE SEQUENCE [LARGE SCALE GENOMIC DNA]</scope>
    <source>
        <strain>cv. Columbia</strain>
    </source>
</reference>
<reference key="3">
    <citation type="journal article" date="2017" name="Plant J.">
        <title>Araport11: a complete reannotation of the Arabidopsis thaliana reference genome.</title>
        <authorList>
            <person name="Cheng C.Y."/>
            <person name="Krishnakumar V."/>
            <person name="Chan A.P."/>
            <person name="Thibaud-Nissen F."/>
            <person name="Schobel S."/>
            <person name="Town C.D."/>
        </authorList>
    </citation>
    <scope>GENOME REANNOTATION</scope>
    <source>
        <strain>cv. Columbia</strain>
    </source>
</reference>
<reference key="4">
    <citation type="journal article" date="2003" name="Science">
        <title>Empirical analysis of transcriptional activity in the Arabidopsis genome.</title>
        <authorList>
            <person name="Yamada K."/>
            <person name="Lim J."/>
            <person name="Dale J.M."/>
            <person name="Chen H."/>
            <person name="Shinn P."/>
            <person name="Palm C.J."/>
            <person name="Southwick A.M."/>
            <person name="Wu H.C."/>
            <person name="Kim C.J."/>
            <person name="Nguyen M."/>
            <person name="Pham P.K."/>
            <person name="Cheuk R.F."/>
            <person name="Karlin-Newmann G."/>
            <person name="Liu S.X."/>
            <person name="Lam B."/>
            <person name="Sakano H."/>
            <person name="Wu T."/>
            <person name="Yu G."/>
            <person name="Miranda M."/>
            <person name="Quach H.L."/>
            <person name="Tripp M."/>
            <person name="Chang C.H."/>
            <person name="Lee J.M."/>
            <person name="Toriumi M.J."/>
            <person name="Chan M.M."/>
            <person name="Tang C.C."/>
            <person name="Onodera C.S."/>
            <person name="Deng J.M."/>
            <person name="Akiyama K."/>
            <person name="Ansari Y."/>
            <person name="Arakawa T."/>
            <person name="Banh J."/>
            <person name="Banno F."/>
            <person name="Bowser L."/>
            <person name="Brooks S.Y."/>
            <person name="Carninci P."/>
            <person name="Chao Q."/>
            <person name="Choy N."/>
            <person name="Enju A."/>
            <person name="Goldsmith A.D."/>
            <person name="Gurjal M."/>
            <person name="Hansen N.F."/>
            <person name="Hayashizaki Y."/>
            <person name="Johnson-Hopson C."/>
            <person name="Hsuan V.W."/>
            <person name="Iida K."/>
            <person name="Karnes M."/>
            <person name="Khan S."/>
            <person name="Koesema E."/>
            <person name="Ishida J."/>
            <person name="Jiang P.X."/>
            <person name="Jones T."/>
            <person name="Kawai J."/>
            <person name="Kamiya A."/>
            <person name="Meyers C."/>
            <person name="Nakajima M."/>
            <person name="Narusaka M."/>
            <person name="Seki M."/>
            <person name="Sakurai T."/>
            <person name="Satou M."/>
            <person name="Tamse R."/>
            <person name="Vaysberg M."/>
            <person name="Wallender E.K."/>
            <person name="Wong C."/>
            <person name="Yamamura Y."/>
            <person name="Yuan S."/>
            <person name="Shinozaki K."/>
            <person name="Davis R.W."/>
            <person name="Theologis A."/>
            <person name="Ecker J.R."/>
        </authorList>
    </citation>
    <scope>NUCLEOTIDE SEQUENCE [LARGE SCALE MRNA]</scope>
    <source>
        <strain>cv. Columbia</strain>
    </source>
</reference>
<reference key="5">
    <citation type="journal article" date="2003" name="Plant J.">
        <title>Diverse RNA viruses elicit the expression of common sets of genes in susceptible Arabidopsis thaliana plants.</title>
        <authorList>
            <person name="Whitham S.A."/>
            <person name="Quan S."/>
            <person name="Chang H.S."/>
            <person name="Cooper B."/>
            <person name="Estes B."/>
            <person name="Zhu T."/>
            <person name="Wang X."/>
            <person name="Hou Y.M."/>
        </authorList>
    </citation>
    <scope>INDUCTION BY VIRUS INFECTION</scope>
</reference>
<name>SRG1_ARATH</name>